<dbReference type="EMBL" id="BA000035">
    <property type="protein sequence ID" value="BAC17379.1"/>
    <property type="status" value="ALT_INIT"/>
    <property type="molecule type" value="Genomic_DNA"/>
</dbReference>
<dbReference type="RefSeq" id="WP_011075046.1">
    <property type="nucleotide sequence ID" value="NZ_GG700687.1"/>
</dbReference>
<dbReference type="SMR" id="Q8FS35"/>
<dbReference type="STRING" id="196164.gene:10740971"/>
<dbReference type="KEGG" id="cef:CE0569"/>
<dbReference type="eggNOG" id="COG0099">
    <property type="taxonomic scope" value="Bacteria"/>
</dbReference>
<dbReference type="HOGENOM" id="CLU_103849_1_2_11"/>
<dbReference type="OrthoDB" id="9803610at2"/>
<dbReference type="Proteomes" id="UP000001409">
    <property type="component" value="Chromosome"/>
</dbReference>
<dbReference type="GO" id="GO:0005829">
    <property type="term" value="C:cytosol"/>
    <property type="evidence" value="ECO:0007669"/>
    <property type="project" value="TreeGrafter"/>
</dbReference>
<dbReference type="GO" id="GO:0015935">
    <property type="term" value="C:small ribosomal subunit"/>
    <property type="evidence" value="ECO:0007669"/>
    <property type="project" value="TreeGrafter"/>
</dbReference>
<dbReference type="GO" id="GO:0019843">
    <property type="term" value="F:rRNA binding"/>
    <property type="evidence" value="ECO:0007669"/>
    <property type="project" value="UniProtKB-UniRule"/>
</dbReference>
<dbReference type="GO" id="GO:0003735">
    <property type="term" value="F:structural constituent of ribosome"/>
    <property type="evidence" value="ECO:0007669"/>
    <property type="project" value="InterPro"/>
</dbReference>
<dbReference type="GO" id="GO:0000049">
    <property type="term" value="F:tRNA binding"/>
    <property type="evidence" value="ECO:0007669"/>
    <property type="project" value="UniProtKB-UniRule"/>
</dbReference>
<dbReference type="GO" id="GO:0006412">
    <property type="term" value="P:translation"/>
    <property type="evidence" value="ECO:0007669"/>
    <property type="project" value="UniProtKB-UniRule"/>
</dbReference>
<dbReference type="FunFam" id="1.10.8.50:FF:000001">
    <property type="entry name" value="30S ribosomal protein S13"/>
    <property type="match status" value="1"/>
</dbReference>
<dbReference type="FunFam" id="4.10.910.10:FF:000001">
    <property type="entry name" value="30S ribosomal protein S13"/>
    <property type="match status" value="1"/>
</dbReference>
<dbReference type="Gene3D" id="1.10.8.50">
    <property type="match status" value="1"/>
</dbReference>
<dbReference type="Gene3D" id="4.10.910.10">
    <property type="entry name" value="30s ribosomal protein s13, domain 2"/>
    <property type="match status" value="1"/>
</dbReference>
<dbReference type="HAMAP" id="MF_01315">
    <property type="entry name" value="Ribosomal_uS13"/>
    <property type="match status" value="1"/>
</dbReference>
<dbReference type="InterPro" id="IPR027437">
    <property type="entry name" value="Rbsml_uS13_C"/>
</dbReference>
<dbReference type="InterPro" id="IPR001892">
    <property type="entry name" value="Ribosomal_uS13"/>
</dbReference>
<dbReference type="InterPro" id="IPR010979">
    <property type="entry name" value="Ribosomal_uS13-like_H2TH"/>
</dbReference>
<dbReference type="InterPro" id="IPR019980">
    <property type="entry name" value="Ribosomal_uS13_bac-type"/>
</dbReference>
<dbReference type="InterPro" id="IPR018269">
    <property type="entry name" value="Ribosomal_uS13_CS"/>
</dbReference>
<dbReference type="NCBIfam" id="TIGR03631">
    <property type="entry name" value="uS13_bact"/>
    <property type="match status" value="1"/>
</dbReference>
<dbReference type="PANTHER" id="PTHR10871">
    <property type="entry name" value="30S RIBOSOMAL PROTEIN S13/40S RIBOSOMAL PROTEIN S18"/>
    <property type="match status" value="1"/>
</dbReference>
<dbReference type="PANTHER" id="PTHR10871:SF1">
    <property type="entry name" value="SMALL RIBOSOMAL SUBUNIT PROTEIN US13M"/>
    <property type="match status" value="1"/>
</dbReference>
<dbReference type="Pfam" id="PF00416">
    <property type="entry name" value="Ribosomal_S13"/>
    <property type="match status" value="1"/>
</dbReference>
<dbReference type="PIRSF" id="PIRSF002134">
    <property type="entry name" value="Ribosomal_S13"/>
    <property type="match status" value="1"/>
</dbReference>
<dbReference type="SUPFAM" id="SSF46946">
    <property type="entry name" value="S13-like H2TH domain"/>
    <property type="match status" value="1"/>
</dbReference>
<dbReference type="PROSITE" id="PS00646">
    <property type="entry name" value="RIBOSOMAL_S13_1"/>
    <property type="match status" value="1"/>
</dbReference>
<dbReference type="PROSITE" id="PS50159">
    <property type="entry name" value="RIBOSOMAL_S13_2"/>
    <property type="match status" value="1"/>
</dbReference>
<evidence type="ECO:0000255" key="1">
    <source>
        <dbReference type="HAMAP-Rule" id="MF_01315"/>
    </source>
</evidence>
<evidence type="ECO:0000256" key="2">
    <source>
        <dbReference type="SAM" id="MobiDB-lite"/>
    </source>
</evidence>
<evidence type="ECO:0000305" key="3"/>
<protein>
    <recommendedName>
        <fullName evidence="1">Small ribosomal subunit protein uS13</fullName>
    </recommendedName>
    <alternativeName>
        <fullName evidence="3">30S ribosomal protein S13</fullName>
    </alternativeName>
</protein>
<comment type="function">
    <text evidence="1">Located at the top of the head of the 30S subunit, it contacts several helices of the 16S rRNA. In the 70S ribosome it contacts the 23S rRNA (bridge B1a) and protein L5 of the 50S subunit (bridge B1b), connecting the 2 subunits; these bridges are implicated in subunit movement. Contacts the tRNAs in the A and P-sites.</text>
</comment>
<comment type="subunit">
    <text evidence="1">Part of the 30S ribosomal subunit. Forms a loose heterodimer with protein S19. Forms two bridges to the 50S subunit in the 70S ribosome.</text>
</comment>
<comment type="similarity">
    <text evidence="1">Belongs to the universal ribosomal protein uS13 family.</text>
</comment>
<comment type="sequence caution" evidence="3">
    <conflict type="erroneous initiation">
        <sequence resource="EMBL-CDS" id="BAC17379"/>
    </conflict>
</comment>
<feature type="chain" id="PRO_0000132085" description="Small ribosomal subunit protein uS13">
    <location>
        <begin position="1"/>
        <end position="122"/>
    </location>
</feature>
<feature type="region of interest" description="Disordered" evidence="2">
    <location>
        <begin position="93"/>
        <end position="122"/>
    </location>
</feature>
<proteinExistence type="inferred from homology"/>
<keyword id="KW-1185">Reference proteome</keyword>
<keyword id="KW-0687">Ribonucleoprotein</keyword>
<keyword id="KW-0689">Ribosomal protein</keyword>
<keyword id="KW-0694">RNA-binding</keyword>
<keyword id="KW-0699">rRNA-binding</keyword>
<keyword id="KW-0820">tRNA-binding</keyword>
<reference key="1">
    <citation type="journal article" date="2003" name="Genome Res.">
        <title>Comparative complete genome sequence analysis of the amino acid replacements responsible for the thermostability of Corynebacterium efficiens.</title>
        <authorList>
            <person name="Nishio Y."/>
            <person name="Nakamura Y."/>
            <person name="Kawarabayasi Y."/>
            <person name="Usuda Y."/>
            <person name="Kimura E."/>
            <person name="Sugimoto S."/>
            <person name="Matsui K."/>
            <person name="Yamagishi A."/>
            <person name="Kikuchi H."/>
            <person name="Ikeo K."/>
            <person name="Gojobori T."/>
        </authorList>
    </citation>
    <scope>NUCLEOTIDE SEQUENCE [LARGE SCALE GENOMIC DNA]</scope>
    <source>
        <strain>DSM 44549 / YS-314 / AJ 12310 / JCM 11189 / NBRC 100395</strain>
    </source>
</reference>
<accession>Q8FS35</accession>
<gene>
    <name evidence="1" type="primary">rpsM</name>
    <name type="ordered locus">CE0569</name>
</gene>
<organism>
    <name type="scientific">Corynebacterium efficiens (strain DSM 44549 / YS-314 / AJ 12310 / JCM 11189 / NBRC 100395)</name>
    <dbReference type="NCBI Taxonomy" id="196164"/>
    <lineage>
        <taxon>Bacteria</taxon>
        <taxon>Bacillati</taxon>
        <taxon>Actinomycetota</taxon>
        <taxon>Actinomycetes</taxon>
        <taxon>Mycobacteriales</taxon>
        <taxon>Corynebacteriaceae</taxon>
        <taxon>Corynebacterium</taxon>
    </lineage>
</organism>
<sequence length="122" mass="13833">MARLAGVDLPRNKRMEIALTYIYGIGPARAKQLLEETGVSPDLRTDNLTDEQIASLRDVIEATWKVEGDLRREVQADIRRKIEIGSYQGLRHRRGLPVRGQRTKTNARTRKGPKKTIAGKKK</sequence>
<name>RS13_COREF</name>